<keyword id="KW-0002">3D-structure</keyword>
<keyword id="KW-0963">Cytoplasm</keyword>
<keyword id="KW-0903">Direct protein sequencing</keyword>
<keyword id="KW-1185">Reference proteome</keyword>
<keyword id="KW-0687">Ribonucleoprotein</keyword>
<keyword id="KW-0689">Ribosomal protein</keyword>
<organism>
    <name type="scientific">Saccharomyces cerevisiae (strain ATCC 204508 / S288c)</name>
    <name type="common">Baker's yeast</name>
    <dbReference type="NCBI Taxonomy" id="559292"/>
    <lineage>
        <taxon>Eukaryota</taxon>
        <taxon>Fungi</taxon>
        <taxon>Dikarya</taxon>
        <taxon>Ascomycota</taxon>
        <taxon>Saccharomycotina</taxon>
        <taxon>Saccharomycetes</taxon>
        <taxon>Saccharomycetales</taxon>
        <taxon>Saccharomycetaceae</taxon>
        <taxon>Saccharomyces</taxon>
    </lineage>
</organism>
<name>RL7A_YEAST</name>
<dbReference type="EMBL" id="X62627">
    <property type="protein sequence ID" value="CAA44495.1"/>
    <property type="molecule type" value="Genomic_DNA"/>
</dbReference>
<dbReference type="EMBL" id="Z72598">
    <property type="protein sequence ID" value="CAA96781.1"/>
    <property type="molecule type" value="Genomic_DNA"/>
</dbReference>
<dbReference type="EMBL" id="Z72597">
    <property type="protein sequence ID" value="CAA96779.2"/>
    <property type="status" value="ALT_SEQ"/>
    <property type="molecule type" value="Genomic_DNA"/>
</dbReference>
<dbReference type="EMBL" id="BK006941">
    <property type="protein sequence ID" value="DAA08029.1"/>
    <property type="molecule type" value="Genomic_DNA"/>
</dbReference>
<dbReference type="PIR" id="S22789">
    <property type="entry name" value="R5BYL7"/>
</dbReference>
<dbReference type="RefSeq" id="NP_011439.1">
    <property type="nucleotide sequence ID" value="NM_001180941.1"/>
</dbReference>
<dbReference type="PDB" id="3J6X">
    <property type="method" value="EM"/>
    <property type="resolution" value="6.10 A"/>
    <property type="chains" value="L7=1-244"/>
</dbReference>
<dbReference type="PDB" id="3J6Y">
    <property type="method" value="EM"/>
    <property type="resolution" value="6.10 A"/>
    <property type="chains" value="L7=1-244"/>
</dbReference>
<dbReference type="PDB" id="3J77">
    <property type="method" value="EM"/>
    <property type="resolution" value="6.20 A"/>
    <property type="chains" value="L7=1-244"/>
</dbReference>
<dbReference type="PDB" id="3J78">
    <property type="method" value="EM"/>
    <property type="resolution" value="6.30 A"/>
    <property type="chains" value="L7=1-244"/>
</dbReference>
<dbReference type="PDB" id="3JCT">
    <property type="method" value="EM"/>
    <property type="resolution" value="3.08 A"/>
    <property type="chains" value="F=1-244"/>
</dbReference>
<dbReference type="PDB" id="4U3M">
    <property type="method" value="X-ray"/>
    <property type="resolution" value="3.00 A"/>
    <property type="chains" value="L7/l7=2-244"/>
</dbReference>
<dbReference type="PDB" id="4U3N">
    <property type="method" value="X-ray"/>
    <property type="resolution" value="3.20 A"/>
    <property type="chains" value="L7/l7=2-244"/>
</dbReference>
<dbReference type="PDB" id="4U3U">
    <property type="method" value="X-ray"/>
    <property type="resolution" value="2.90 A"/>
    <property type="chains" value="L7/l7=2-244"/>
</dbReference>
<dbReference type="PDB" id="4U4N">
    <property type="method" value="X-ray"/>
    <property type="resolution" value="3.10 A"/>
    <property type="chains" value="L7/l7=2-244"/>
</dbReference>
<dbReference type="PDB" id="4U4O">
    <property type="method" value="X-ray"/>
    <property type="resolution" value="3.60 A"/>
    <property type="chains" value="L7/l7=2-244"/>
</dbReference>
<dbReference type="PDB" id="4U4Q">
    <property type="method" value="X-ray"/>
    <property type="resolution" value="3.00 A"/>
    <property type="chains" value="L7/l7=2-244"/>
</dbReference>
<dbReference type="PDB" id="4U4R">
    <property type="method" value="X-ray"/>
    <property type="resolution" value="2.80 A"/>
    <property type="chains" value="L7/l7=2-244"/>
</dbReference>
<dbReference type="PDB" id="4U4U">
    <property type="method" value="X-ray"/>
    <property type="resolution" value="3.00 A"/>
    <property type="chains" value="L7/l7=2-244"/>
</dbReference>
<dbReference type="PDB" id="4U4Y">
    <property type="method" value="X-ray"/>
    <property type="resolution" value="3.20 A"/>
    <property type="chains" value="L7/l7=2-244"/>
</dbReference>
<dbReference type="PDB" id="4U4Z">
    <property type="method" value="X-ray"/>
    <property type="resolution" value="3.10 A"/>
    <property type="chains" value="L7/l7=2-244"/>
</dbReference>
<dbReference type="PDB" id="4U50">
    <property type="method" value="X-ray"/>
    <property type="resolution" value="3.20 A"/>
    <property type="chains" value="L7/l7=2-244"/>
</dbReference>
<dbReference type="PDB" id="4U51">
    <property type="method" value="X-ray"/>
    <property type="resolution" value="3.20 A"/>
    <property type="chains" value="L7/l7=2-244"/>
</dbReference>
<dbReference type="PDB" id="4U52">
    <property type="method" value="X-ray"/>
    <property type="resolution" value="3.00 A"/>
    <property type="chains" value="L7/l7=2-244"/>
</dbReference>
<dbReference type="PDB" id="4U53">
    <property type="method" value="X-ray"/>
    <property type="resolution" value="3.30 A"/>
    <property type="chains" value="L7/l7=2-244"/>
</dbReference>
<dbReference type="PDB" id="4U55">
    <property type="method" value="X-ray"/>
    <property type="resolution" value="3.20 A"/>
    <property type="chains" value="L7/l7=2-244"/>
</dbReference>
<dbReference type="PDB" id="4U56">
    <property type="method" value="X-ray"/>
    <property type="resolution" value="3.45 A"/>
    <property type="chains" value="L7/l7=2-244"/>
</dbReference>
<dbReference type="PDB" id="4U6F">
    <property type="method" value="X-ray"/>
    <property type="resolution" value="3.10 A"/>
    <property type="chains" value="L7/l7=2-244"/>
</dbReference>
<dbReference type="PDB" id="4V4B">
    <property type="method" value="EM"/>
    <property type="resolution" value="11.70 A"/>
    <property type="chains" value="BF=83-244"/>
</dbReference>
<dbReference type="PDB" id="4V5Z">
    <property type="method" value="EM"/>
    <property type="resolution" value="8.70 A"/>
    <property type="chains" value="Bw=8-244"/>
</dbReference>
<dbReference type="PDB" id="4V6I">
    <property type="method" value="EM"/>
    <property type="resolution" value="8.80 A"/>
    <property type="chains" value="Be=1-244"/>
</dbReference>
<dbReference type="PDB" id="4V7F">
    <property type="method" value="EM"/>
    <property type="resolution" value="8.70 A"/>
    <property type="chains" value="a=1-244"/>
</dbReference>
<dbReference type="PDB" id="4V7R">
    <property type="method" value="X-ray"/>
    <property type="resolution" value="4.00 A"/>
    <property type="chains" value="BG/DG=1-244"/>
</dbReference>
<dbReference type="PDB" id="4V88">
    <property type="method" value="X-ray"/>
    <property type="resolution" value="3.00 A"/>
    <property type="chains" value="BF/DF=1-244"/>
</dbReference>
<dbReference type="PDB" id="4V8T">
    <property type="method" value="EM"/>
    <property type="resolution" value="8.10 A"/>
    <property type="chains" value="F=1-244"/>
</dbReference>
<dbReference type="PDB" id="4V8Y">
    <property type="method" value="EM"/>
    <property type="resolution" value="4.30 A"/>
    <property type="chains" value="BF=2-244"/>
</dbReference>
<dbReference type="PDB" id="4V8Z">
    <property type="method" value="EM"/>
    <property type="resolution" value="6.60 A"/>
    <property type="chains" value="BF=2-244"/>
</dbReference>
<dbReference type="PDB" id="4V91">
    <property type="method" value="EM"/>
    <property type="resolution" value="3.70 A"/>
    <property type="chains" value="F=1-244"/>
</dbReference>
<dbReference type="PDB" id="5APN">
    <property type="method" value="EM"/>
    <property type="resolution" value="3.91 A"/>
    <property type="chains" value="F=1-244"/>
</dbReference>
<dbReference type="PDB" id="5APO">
    <property type="method" value="EM"/>
    <property type="resolution" value="3.41 A"/>
    <property type="chains" value="F=1-244"/>
</dbReference>
<dbReference type="PDB" id="5DAT">
    <property type="method" value="X-ray"/>
    <property type="resolution" value="3.15 A"/>
    <property type="chains" value="L7/l7=2-244"/>
</dbReference>
<dbReference type="PDB" id="5DC3">
    <property type="method" value="X-ray"/>
    <property type="resolution" value="3.25 A"/>
    <property type="chains" value="L7/l7=2-244"/>
</dbReference>
<dbReference type="PDB" id="5DGE">
    <property type="method" value="X-ray"/>
    <property type="resolution" value="3.45 A"/>
    <property type="chains" value="L7/l7=2-244"/>
</dbReference>
<dbReference type="PDB" id="5DGF">
    <property type="method" value="X-ray"/>
    <property type="resolution" value="3.30 A"/>
    <property type="chains" value="L7/l7=2-244"/>
</dbReference>
<dbReference type="PDB" id="5DGV">
    <property type="method" value="X-ray"/>
    <property type="resolution" value="3.10 A"/>
    <property type="chains" value="L7/l7=2-244"/>
</dbReference>
<dbReference type="PDB" id="5FCI">
    <property type="method" value="X-ray"/>
    <property type="resolution" value="3.40 A"/>
    <property type="chains" value="L7/l7=2-244"/>
</dbReference>
<dbReference type="PDB" id="5FCJ">
    <property type="method" value="X-ray"/>
    <property type="resolution" value="3.10 A"/>
    <property type="chains" value="L7/l7=2-244"/>
</dbReference>
<dbReference type="PDB" id="5GAK">
    <property type="method" value="EM"/>
    <property type="resolution" value="3.88 A"/>
    <property type="chains" value="J=1-244"/>
</dbReference>
<dbReference type="PDB" id="5H4P">
    <property type="method" value="EM"/>
    <property type="resolution" value="3.07 A"/>
    <property type="chains" value="F=1-244"/>
</dbReference>
<dbReference type="PDB" id="5I4L">
    <property type="method" value="X-ray"/>
    <property type="resolution" value="3.10 A"/>
    <property type="chains" value="L7/l7=22-244"/>
</dbReference>
<dbReference type="PDB" id="5JCS">
    <property type="method" value="EM"/>
    <property type="resolution" value="9.50 A"/>
    <property type="chains" value="F=1-244"/>
</dbReference>
<dbReference type="PDB" id="5JUO">
    <property type="method" value="EM"/>
    <property type="resolution" value="4.00 A"/>
    <property type="chains" value="K=1-244"/>
</dbReference>
<dbReference type="PDB" id="5JUP">
    <property type="method" value="EM"/>
    <property type="resolution" value="3.50 A"/>
    <property type="chains" value="K=1-244"/>
</dbReference>
<dbReference type="PDB" id="5JUS">
    <property type="method" value="EM"/>
    <property type="resolution" value="4.20 A"/>
    <property type="chains" value="K=1-244"/>
</dbReference>
<dbReference type="PDB" id="5JUT">
    <property type="method" value="EM"/>
    <property type="resolution" value="4.00 A"/>
    <property type="chains" value="K=1-244"/>
</dbReference>
<dbReference type="PDB" id="5JUU">
    <property type="method" value="EM"/>
    <property type="resolution" value="4.00 A"/>
    <property type="chains" value="K=1-244"/>
</dbReference>
<dbReference type="PDB" id="5LYB">
    <property type="method" value="X-ray"/>
    <property type="resolution" value="3.25 A"/>
    <property type="chains" value="L7/l7=22-244"/>
</dbReference>
<dbReference type="PDB" id="5M1J">
    <property type="method" value="EM"/>
    <property type="resolution" value="3.30 A"/>
    <property type="chains" value="F5=23-244"/>
</dbReference>
<dbReference type="PDB" id="5MC6">
    <property type="method" value="EM"/>
    <property type="resolution" value="3.80 A"/>
    <property type="chains" value="BO=1-244"/>
</dbReference>
<dbReference type="PDB" id="5MEI">
    <property type="method" value="X-ray"/>
    <property type="resolution" value="3.50 A"/>
    <property type="chains" value="CI/o=23-244"/>
</dbReference>
<dbReference type="PDB" id="5NDG">
    <property type="method" value="X-ray"/>
    <property type="resolution" value="3.70 A"/>
    <property type="chains" value="L7/l7=22-244"/>
</dbReference>
<dbReference type="PDB" id="5NDV">
    <property type="method" value="X-ray"/>
    <property type="resolution" value="3.30 A"/>
    <property type="chains" value="L7/l7=19-244"/>
</dbReference>
<dbReference type="PDB" id="5NDW">
    <property type="method" value="X-ray"/>
    <property type="resolution" value="3.70 A"/>
    <property type="chains" value="L7/l7=22-244"/>
</dbReference>
<dbReference type="PDB" id="5OBM">
    <property type="method" value="X-ray"/>
    <property type="resolution" value="3.40 A"/>
    <property type="chains" value="L7/l7=22-244"/>
</dbReference>
<dbReference type="PDB" id="5ON6">
    <property type="method" value="X-ray"/>
    <property type="resolution" value="3.10 A"/>
    <property type="chains" value="CI/o=23-244"/>
</dbReference>
<dbReference type="PDB" id="5T62">
    <property type="method" value="EM"/>
    <property type="resolution" value="3.30 A"/>
    <property type="chains" value="I=1-244"/>
</dbReference>
<dbReference type="PDB" id="5T6R">
    <property type="method" value="EM"/>
    <property type="resolution" value="4.50 A"/>
    <property type="chains" value="I=1-244"/>
</dbReference>
<dbReference type="PDB" id="5TBW">
    <property type="method" value="X-ray"/>
    <property type="resolution" value="3.00 A"/>
    <property type="chains" value="CI/o=23-244"/>
</dbReference>
<dbReference type="PDB" id="5TGA">
    <property type="method" value="X-ray"/>
    <property type="resolution" value="3.30 A"/>
    <property type="chains" value="L7/l7=22-244"/>
</dbReference>
<dbReference type="PDB" id="5TGM">
    <property type="method" value="X-ray"/>
    <property type="resolution" value="3.50 A"/>
    <property type="chains" value="L7/l7=22-244"/>
</dbReference>
<dbReference type="PDB" id="5Z3G">
    <property type="method" value="EM"/>
    <property type="resolution" value="3.65 A"/>
    <property type="chains" value="J=1-244"/>
</dbReference>
<dbReference type="PDB" id="6C0F">
    <property type="method" value="EM"/>
    <property type="resolution" value="3.70 A"/>
    <property type="chains" value="F=1-244"/>
</dbReference>
<dbReference type="PDB" id="6CB1">
    <property type="method" value="EM"/>
    <property type="resolution" value="4.60 A"/>
    <property type="chains" value="F=1-244"/>
</dbReference>
<dbReference type="PDB" id="6ELZ">
    <property type="method" value="EM"/>
    <property type="resolution" value="3.30 A"/>
    <property type="chains" value="F=1-244"/>
</dbReference>
<dbReference type="PDB" id="6EM1">
    <property type="method" value="EM"/>
    <property type="resolution" value="3.60 A"/>
    <property type="chains" value="F=1-244"/>
</dbReference>
<dbReference type="PDB" id="6EM3">
    <property type="method" value="EM"/>
    <property type="resolution" value="3.20 A"/>
    <property type="chains" value="F=1-244"/>
</dbReference>
<dbReference type="PDB" id="6EM4">
    <property type="method" value="EM"/>
    <property type="resolution" value="4.10 A"/>
    <property type="chains" value="F=1-244"/>
</dbReference>
<dbReference type="PDB" id="6EM5">
    <property type="method" value="EM"/>
    <property type="resolution" value="4.30 A"/>
    <property type="chains" value="F=1-244"/>
</dbReference>
<dbReference type="PDB" id="6FT6">
    <property type="method" value="EM"/>
    <property type="resolution" value="3.90 A"/>
    <property type="chains" value="F=1-244"/>
</dbReference>
<dbReference type="PDB" id="6GQ1">
    <property type="method" value="EM"/>
    <property type="resolution" value="4.40 A"/>
    <property type="chains" value="F=23-244"/>
</dbReference>
<dbReference type="PDB" id="6GQB">
    <property type="method" value="EM"/>
    <property type="resolution" value="3.90 A"/>
    <property type="chains" value="F=23-244"/>
</dbReference>
<dbReference type="PDB" id="6GQV">
    <property type="method" value="EM"/>
    <property type="resolution" value="4.00 A"/>
    <property type="chains" value="F=23-244"/>
</dbReference>
<dbReference type="PDB" id="6HD7">
    <property type="method" value="EM"/>
    <property type="resolution" value="3.40 A"/>
    <property type="chains" value="J=1-244"/>
</dbReference>
<dbReference type="PDB" id="6HHQ">
    <property type="method" value="X-ray"/>
    <property type="resolution" value="3.10 A"/>
    <property type="chains" value="CI/o=1-244"/>
</dbReference>
<dbReference type="PDB" id="6I7O">
    <property type="method" value="EM"/>
    <property type="resolution" value="5.30 A"/>
    <property type="chains" value="BO/YO=22-244"/>
</dbReference>
<dbReference type="PDB" id="6M62">
    <property type="method" value="EM"/>
    <property type="resolution" value="3.20 A"/>
    <property type="chains" value="F=1-244"/>
</dbReference>
<dbReference type="PDB" id="6N8J">
    <property type="method" value="EM"/>
    <property type="resolution" value="3.50 A"/>
    <property type="chains" value="F=1-244"/>
</dbReference>
<dbReference type="PDB" id="6N8K">
    <property type="method" value="EM"/>
    <property type="resolution" value="3.60 A"/>
    <property type="chains" value="F=1-244"/>
</dbReference>
<dbReference type="PDB" id="6N8L">
    <property type="method" value="EM"/>
    <property type="resolution" value="3.60 A"/>
    <property type="chains" value="F=1-244"/>
</dbReference>
<dbReference type="PDB" id="6N8M">
    <property type="method" value="EM"/>
    <property type="resolution" value="3.50 A"/>
    <property type="chains" value="I=1-244"/>
</dbReference>
<dbReference type="PDB" id="6N8N">
    <property type="method" value="EM"/>
    <property type="resolution" value="3.80 A"/>
    <property type="chains" value="I=1-244"/>
</dbReference>
<dbReference type="PDB" id="6N8O">
    <property type="method" value="EM"/>
    <property type="resolution" value="3.50 A"/>
    <property type="chains" value="I=1-244"/>
</dbReference>
<dbReference type="PDB" id="6OIG">
    <property type="method" value="EM"/>
    <property type="resolution" value="3.80 A"/>
    <property type="chains" value="F=23-244"/>
</dbReference>
<dbReference type="PDB" id="6Q8Y">
    <property type="method" value="EM"/>
    <property type="resolution" value="3.10 A"/>
    <property type="chains" value="BO=23-244"/>
</dbReference>
<dbReference type="PDB" id="6QIK">
    <property type="method" value="EM"/>
    <property type="resolution" value="3.10 A"/>
    <property type="chains" value="b=1-244"/>
</dbReference>
<dbReference type="PDB" id="6QT0">
    <property type="method" value="EM"/>
    <property type="resolution" value="3.40 A"/>
    <property type="chains" value="b=1-244"/>
</dbReference>
<dbReference type="PDB" id="6QTZ">
    <property type="method" value="EM"/>
    <property type="resolution" value="3.50 A"/>
    <property type="chains" value="b=1-244"/>
</dbReference>
<dbReference type="PDB" id="6R84">
    <property type="method" value="EM"/>
    <property type="resolution" value="3.60 A"/>
    <property type="chains" value="J=23-244"/>
</dbReference>
<dbReference type="PDB" id="6R86">
    <property type="method" value="EM"/>
    <property type="resolution" value="3.40 A"/>
    <property type="chains" value="J=23-244"/>
</dbReference>
<dbReference type="PDB" id="6R87">
    <property type="method" value="EM"/>
    <property type="resolution" value="3.40 A"/>
    <property type="chains" value="J=23-244"/>
</dbReference>
<dbReference type="PDB" id="6RI5">
    <property type="method" value="EM"/>
    <property type="resolution" value="3.30 A"/>
    <property type="chains" value="b=1-244"/>
</dbReference>
<dbReference type="PDB" id="6RZZ">
    <property type="method" value="EM"/>
    <property type="resolution" value="3.20 A"/>
    <property type="chains" value="b=1-244"/>
</dbReference>
<dbReference type="PDB" id="6S05">
    <property type="method" value="EM"/>
    <property type="resolution" value="3.90 A"/>
    <property type="chains" value="b=1-244"/>
</dbReference>
<dbReference type="PDB" id="6S47">
    <property type="method" value="EM"/>
    <property type="resolution" value="3.28 A"/>
    <property type="chains" value="AI=2-244"/>
</dbReference>
<dbReference type="PDB" id="6SNT">
    <property type="method" value="EM"/>
    <property type="resolution" value="2.80 A"/>
    <property type="chains" value="m=1-244"/>
</dbReference>
<dbReference type="PDB" id="6SV4">
    <property type="method" value="EM"/>
    <property type="resolution" value="3.30 A"/>
    <property type="chains" value="BO/YO/ZO=1-244"/>
</dbReference>
<dbReference type="PDB" id="6T4Q">
    <property type="method" value="EM"/>
    <property type="resolution" value="2.60 A"/>
    <property type="chains" value="LF=23-244"/>
</dbReference>
<dbReference type="PDB" id="6T7I">
    <property type="method" value="EM"/>
    <property type="resolution" value="3.20 A"/>
    <property type="chains" value="LF=1-244"/>
</dbReference>
<dbReference type="PDB" id="6T7T">
    <property type="method" value="EM"/>
    <property type="resolution" value="3.10 A"/>
    <property type="chains" value="LF=1-244"/>
</dbReference>
<dbReference type="PDB" id="6T83">
    <property type="method" value="EM"/>
    <property type="resolution" value="4.00 A"/>
    <property type="chains" value="Fy/Ia=1-244"/>
</dbReference>
<dbReference type="PDB" id="6TB3">
    <property type="method" value="EM"/>
    <property type="resolution" value="2.80 A"/>
    <property type="chains" value="BO=23-244"/>
</dbReference>
<dbReference type="PDB" id="6TNU">
    <property type="method" value="EM"/>
    <property type="resolution" value="3.10 A"/>
    <property type="chains" value="BO=23-244"/>
</dbReference>
<dbReference type="PDB" id="6WOO">
    <property type="method" value="EM"/>
    <property type="resolution" value="2.90 A"/>
    <property type="chains" value="F=23-244"/>
</dbReference>
<dbReference type="PDB" id="6XIQ">
    <property type="method" value="EM"/>
    <property type="resolution" value="4.20 A"/>
    <property type="chains" value="F=1-244"/>
</dbReference>
<dbReference type="PDB" id="6XIR">
    <property type="method" value="EM"/>
    <property type="resolution" value="3.20 A"/>
    <property type="chains" value="F=1-244"/>
</dbReference>
<dbReference type="PDB" id="6YLG">
    <property type="method" value="EM"/>
    <property type="resolution" value="3.00 A"/>
    <property type="chains" value="F=1-244"/>
</dbReference>
<dbReference type="PDB" id="6YLH">
    <property type="method" value="EM"/>
    <property type="resolution" value="3.10 A"/>
    <property type="chains" value="F=1-244"/>
</dbReference>
<dbReference type="PDB" id="6YLX">
    <property type="method" value="EM"/>
    <property type="resolution" value="3.90 A"/>
    <property type="chains" value="F=1-244"/>
</dbReference>
<dbReference type="PDB" id="6YLY">
    <property type="method" value="EM"/>
    <property type="resolution" value="3.80 A"/>
    <property type="chains" value="F=1-244"/>
</dbReference>
<dbReference type="PDB" id="6Z6J">
    <property type="method" value="EM"/>
    <property type="resolution" value="3.40 A"/>
    <property type="chains" value="LF=1-244"/>
</dbReference>
<dbReference type="PDB" id="6Z6K">
    <property type="method" value="EM"/>
    <property type="resolution" value="3.40 A"/>
    <property type="chains" value="LF=1-244"/>
</dbReference>
<dbReference type="PDB" id="7AZY">
    <property type="method" value="EM"/>
    <property type="resolution" value="2.88 A"/>
    <property type="chains" value="C=1-244"/>
</dbReference>
<dbReference type="PDB" id="7B7D">
    <property type="method" value="EM"/>
    <property type="resolution" value="3.30 A"/>
    <property type="chains" value="LI=23-244"/>
</dbReference>
<dbReference type="PDB" id="7BT6">
    <property type="method" value="EM"/>
    <property type="resolution" value="3.12 A"/>
    <property type="chains" value="F=1-244"/>
</dbReference>
<dbReference type="PDB" id="7BTB">
    <property type="method" value="EM"/>
    <property type="resolution" value="3.22 A"/>
    <property type="chains" value="F=1-244"/>
</dbReference>
<dbReference type="PDB" id="7MPI">
    <property type="method" value="EM"/>
    <property type="resolution" value="3.05 A"/>
    <property type="chains" value="AF=23-244"/>
</dbReference>
<dbReference type="PDB" id="7MPJ">
    <property type="method" value="EM"/>
    <property type="resolution" value="2.70 A"/>
    <property type="chains" value="AF=23-244"/>
</dbReference>
<dbReference type="PDB" id="7N8B">
    <property type="method" value="EM"/>
    <property type="resolution" value="3.05 A"/>
    <property type="chains" value="AF=23-244"/>
</dbReference>
<dbReference type="PDB" id="7NAC">
    <property type="method" value="EM"/>
    <property type="resolution" value="3.04 A"/>
    <property type="chains" value="F=1-244"/>
</dbReference>
<dbReference type="PDB" id="7NRC">
    <property type="method" value="EM"/>
    <property type="resolution" value="3.90 A"/>
    <property type="chains" value="LI=23-244"/>
</dbReference>
<dbReference type="PDB" id="7NRD">
    <property type="method" value="EM"/>
    <property type="resolution" value="4.36 A"/>
    <property type="chains" value="LI=23-244"/>
</dbReference>
<dbReference type="PDB" id="7OF1">
    <property type="method" value="EM"/>
    <property type="resolution" value="3.10 A"/>
    <property type="chains" value="F=1-244"/>
</dbReference>
<dbReference type="PDB" id="7OH3">
    <property type="method" value="EM"/>
    <property type="resolution" value="3.40 A"/>
    <property type="chains" value="F=1-244"/>
</dbReference>
<dbReference type="PDB" id="7OHP">
    <property type="method" value="EM"/>
    <property type="resolution" value="3.90 A"/>
    <property type="chains" value="F=1-244"/>
</dbReference>
<dbReference type="PDB" id="7OHQ">
    <property type="method" value="EM"/>
    <property type="resolution" value="3.10 A"/>
    <property type="chains" value="F=1-244"/>
</dbReference>
<dbReference type="PDB" id="7OHR">
    <property type="method" value="EM"/>
    <property type="resolution" value="4.72 A"/>
    <property type="chains" value="F=1-244"/>
</dbReference>
<dbReference type="PDB" id="7OHS">
    <property type="method" value="EM"/>
    <property type="resolution" value="4.38 A"/>
    <property type="chains" value="F=1-244"/>
</dbReference>
<dbReference type="PDB" id="7OHT">
    <property type="method" value="EM"/>
    <property type="resolution" value="4.70 A"/>
    <property type="chains" value="F=1-244"/>
</dbReference>
<dbReference type="PDB" id="7OHU">
    <property type="method" value="EM"/>
    <property type="resolution" value="3.70 A"/>
    <property type="chains" value="F=1-244"/>
</dbReference>
<dbReference type="PDB" id="7OHV">
    <property type="method" value="EM"/>
    <property type="resolution" value="3.90 A"/>
    <property type="chains" value="F=1-244"/>
</dbReference>
<dbReference type="PDB" id="7OHW">
    <property type="method" value="EM"/>
    <property type="resolution" value="3.50 A"/>
    <property type="chains" value="F=1-244"/>
</dbReference>
<dbReference type="PDB" id="7OHX">
    <property type="method" value="EM"/>
    <property type="resolution" value="3.30 A"/>
    <property type="chains" value="F=1-244"/>
</dbReference>
<dbReference type="PDB" id="7OHY">
    <property type="method" value="EM"/>
    <property type="resolution" value="3.90 A"/>
    <property type="chains" value="F=1-244"/>
</dbReference>
<dbReference type="PDB" id="7OSA">
    <property type="method" value="X-ray"/>
    <property type="resolution" value="3.00 A"/>
    <property type="chains" value="uL30=1-244"/>
</dbReference>
<dbReference type="PDB" id="7R7A">
    <property type="method" value="EM"/>
    <property type="resolution" value="3.04 A"/>
    <property type="chains" value="F=1-244"/>
</dbReference>
<dbReference type="PDB" id="7TOO">
    <property type="method" value="EM"/>
    <property type="resolution" value="2.70 A"/>
    <property type="chains" value="AL07=1-244"/>
</dbReference>
<dbReference type="PDB" id="7TOP">
    <property type="method" value="EM"/>
    <property type="resolution" value="2.40 A"/>
    <property type="chains" value="AL07=1-244"/>
</dbReference>
<dbReference type="PDB" id="7U0H">
    <property type="method" value="EM"/>
    <property type="resolution" value="2.76 A"/>
    <property type="chains" value="F=1-244"/>
</dbReference>
<dbReference type="PDB" id="7UG6">
    <property type="method" value="EM"/>
    <property type="resolution" value="2.90 A"/>
    <property type="chains" value="F=1-244"/>
</dbReference>
<dbReference type="PDB" id="7UOO">
    <property type="method" value="EM"/>
    <property type="resolution" value="2.34 A"/>
    <property type="chains" value="F=1-244"/>
</dbReference>
<dbReference type="PDB" id="7UQB">
    <property type="method" value="EM"/>
    <property type="resolution" value="2.43 A"/>
    <property type="chains" value="F=1-244"/>
</dbReference>
<dbReference type="PDB" id="7UQZ">
    <property type="method" value="EM"/>
    <property type="resolution" value="2.44 A"/>
    <property type="chains" value="F=1-244"/>
</dbReference>
<dbReference type="PDB" id="7V08">
    <property type="method" value="EM"/>
    <property type="resolution" value="2.36 A"/>
    <property type="chains" value="F=1-244"/>
</dbReference>
<dbReference type="PDB" id="7Z34">
    <property type="method" value="EM"/>
    <property type="resolution" value="3.80 A"/>
    <property type="chains" value="F=1-244"/>
</dbReference>
<dbReference type="PDB" id="7ZPQ">
    <property type="method" value="EM"/>
    <property type="resolution" value="3.47 A"/>
    <property type="chains" value="BF=23-244"/>
</dbReference>
<dbReference type="PDB" id="7ZRS">
    <property type="method" value="EM"/>
    <property type="resolution" value="4.80 A"/>
    <property type="chains" value="BF=23-244"/>
</dbReference>
<dbReference type="PDB" id="7ZS5">
    <property type="method" value="EM"/>
    <property type="resolution" value="3.20 A"/>
    <property type="chains" value="BH=23-244"/>
</dbReference>
<dbReference type="PDB" id="7ZUW">
    <property type="method" value="EM"/>
    <property type="resolution" value="4.30 A"/>
    <property type="chains" value="BF=23-244"/>
</dbReference>
<dbReference type="PDB" id="7ZUX">
    <property type="method" value="EM"/>
    <property type="resolution" value="2.50 A"/>
    <property type="chains" value="EF=23-244"/>
</dbReference>
<dbReference type="PDB" id="7ZW0">
    <property type="method" value="EM"/>
    <property type="resolution" value="2.40 A"/>
    <property type="chains" value="LJ=1-244"/>
</dbReference>
<dbReference type="PDB" id="8AAF">
    <property type="method" value="EM"/>
    <property type="resolution" value="2.50 A"/>
    <property type="chains" value="o=1-244"/>
</dbReference>
<dbReference type="PDB" id="8AGT">
    <property type="method" value="EM"/>
    <property type="resolution" value="2.60 A"/>
    <property type="chains" value="o=1-244"/>
</dbReference>
<dbReference type="PDB" id="8AGU">
    <property type="method" value="EM"/>
    <property type="resolution" value="2.70 A"/>
    <property type="chains" value="o=1-244"/>
</dbReference>
<dbReference type="PDB" id="8AGV">
    <property type="method" value="EM"/>
    <property type="resolution" value="2.60 A"/>
    <property type="chains" value="o=1-244"/>
</dbReference>
<dbReference type="PDB" id="8AGW">
    <property type="method" value="EM"/>
    <property type="resolution" value="2.60 A"/>
    <property type="chains" value="o=1-244"/>
</dbReference>
<dbReference type="PDB" id="8AGX">
    <property type="method" value="EM"/>
    <property type="resolution" value="2.40 A"/>
    <property type="chains" value="o=1-244"/>
</dbReference>
<dbReference type="PDB" id="8AGZ">
    <property type="method" value="EM"/>
    <property type="resolution" value="2.60 A"/>
    <property type="chains" value="o=1-244"/>
</dbReference>
<dbReference type="PDB" id="8BIP">
    <property type="method" value="EM"/>
    <property type="resolution" value="3.10 A"/>
    <property type="chains" value="LF=23-244"/>
</dbReference>
<dbReference type="PDB" id="8BJQ">
    <property type="method" value="EM"/>
    <property type="resolution" value="3.80 A"/>
    <property type="chains" value="LF=23-244"/>
</dbReference>
<dbReference type="PDB" id="8BN3">
    <property type="method" value="EM"/>
    <property type="resolution" value="2.40 A"/>
    <property type="chains" value="L7=23-244"/>
</dbReference>
<dbReference type="PDB" id="8BQD">
    <property type="method" value="EM"/>
    <property type="resolution" value="3.90 A"/>
    <property type="chains" value="BO=23-244"/>
</dbReference>
<dbReference type="PDB" id="8BQX">
    <property type="method" value="EM"/>
    <property type="resolution" value="3.80 A"/>
    <property type="chains" value="BO=23-244"/>
</dbReference>
<dbReference type="PDB" id="8CCS">
    <property type="method" value="EM"/>
    <property type="resolution" value="1.97 A"/>
    <property type="chains" value="JJ=1-244"/>
</dbReference>
<dbReference type="PDB" id="8CDL">
    <property type="method" value="EM"/>
    <property type="resolution" value="2.72 A"/>
    <property type="chains" value="JJ=1-244"/>
</dbReference>
<dbReference type="PDB" id="8CDR">
    <property type="method" value="EM"/>
    <property type="resolution" value="2.04 A"/>
    <property type="chains" value="JJ=1-244"/>
</dbReference>
<dbReference type="PDB" id="8CEH">
    <property type="method" value="EM"/>
    <property type="resolution" value="2.05 A"/>
    <property type="chains" value="JJ=1-244"/>
</dbReference>
<dbReference type="PDB" id="8CF5">
    <property type="method" value="EM"/>
    <property type="resolution" value="2.71 A"/>
    <property type="chains" value="JJ=1-244"/>
</dbReference>
<dbReference type="PDB" id="8CG8">
    <property type="method" value="EM"/>
    <property type="resolution" value="2.57 A"/>
    <property type="chains" value="JJ=1-244"/>
</dbReference>
<dbReference type="PDB" id="8CGN">
    <property type="method" value="EM"/>
    <property type="resolution" value="2.28 A"/>
    <property type="chains" value="JJ=1-244"/>
</dbReference>
<dbReference type="PDB" id="8CIV">
    <property type="method" value="EM"/>
    <property type="resolution" value="2.47 A"/>
    <property type="chains" value="JJ=1-244"/>
</dbReference>
<dbReference type="PDB" id="8CKU">
    <property type="method" value="EM"/>
    <property type="resolution" value="3.11 A"/>
    <property type="chains" value="JJ=1-244"/>
</dbReference>
<dbReference type="PDB" id="8CMJ">
    <property type="method" value="EM"/>
    <property type="resolution" value="3.79 A"/>
    <property type="chains" value="JJ=1-244"/>
</dbReference>
<dbReference type="PDB" id="8E5T">
    <property type="method" value="EM"/>
    <property type="resolution" value="4.00 A"/>
    <property type="chains" value="F=1-244"/>
</dbReference>
<dbReference type="PDB" id="8EUB">
    <property type="method" value="EM"/>
    <property type="resolution" value="2.52 A"/>
    <property type="chains" value="AF=1-244"/>
</dbReference>
<dbReference type="PDB" id="8EVP">
    <property type="method" value="EM"/>
    <property type="resolution" value="2.38 A"/>
    <property type="chains" value="AF=1-244"/>
</dbReference>
<dbReference type="PDB" id="8EVQ">
    <property type="method" value="EM"/>
    <property type="resolution" value="2.72 A"/>
    <property type="chains" value="AF=1-244"/>
</dbReference>
<dbReference type="PDB" id="8EVR">
    <property type="method" value="EM"/>
    <property type="resolution" value="2.87 A"/>
    <property type="chains" value="AF=1-244"/>
</dbReference>
<dbReference type="PDB" id="8EVS">
    <property type="method" value="EM"/>
    <property type="resolution" value="2.62 A"/>
    <property type="chains" value="AF=1-244"/>
</dbReference>
<dbReference type="PDB" id="8EVT">
    <property type="method" value="EM"/>
    <property type="resolution" value="2.20 A"/>
    <property type="chains" value="AF=1-244"/>
</dbReference>
<dbReference type="PDB" id="8EWB">
    <property type="method" value="EM"/>
    <property type="resolution" value="2.87 A"/>
    <property type="chains" value="AF=1-244"/>
</dbReference>
<dbReference type="PDB" id="8EWC">
    <property type="method" value="EM"/>
    <property type="resolution" value="2.45 A"/>
    <property type="chains" value="AF=1-244"/>
</dbReference>
<dbReference type="PDB" id="8HFR">
    <property type="method" value="EM"/>
    <property type="resolution" value="2.64 A"/>
    <property type="chains" value="Gu=1-244"/>
</dbReference>
<dbReference type="PDB" id="8K2D">
    <property type="method" value="EM"/>
    <property type="resolution" value="3.20 A"/>
    <property type="chains" value="LF=1-244"/>
</dbReference>
<dbReference type="PDB" id="8K82">
    <property type="method" value="EM"/>
    <property type="resolution" value="3.00 A"/>
    <property type="chains" value="LF=1-244"/>
</dbReference>
<dbReference type="PDB" id="8P4V">
    <property type="method" value="X-ray"/>
    <property type="resolution" value="3.16 A"/>
    <property type="chains" value="CI/o=1-244"/>
</dbReference>
<dbReference type="PDB" id="8P8M">
    <property type="method" value="EM"/>
    <property type="resolution" value="2.66 A"/>
    <property type="chains" value="LK=1-244"/>
</dbReference>
<dbReference type="PDB" id="8P8N">
    <property type="method" value="EM"/>
    <property type="resolution" value="2.15 A"/>
    <property type="chains" value="LK=1-244"/>
</dbReference>
<dbReference type="PDB" id="8P8U">
    <property type="method" value="EM"/>
    <property type="resolution" value="2.23 A"/>
    <property type="chains" value="LK=1-244"/>
</dbReference>
<dbReference type="PDB" id="8P9A">
    <property type="method" value="X-ray"/>
    <property type="resolution" value="2.90 A"/>
    <property type="chains" value="CI/o=1-244"/>
</dbReference>
<dbReference type="PDB" id="8PFR">
    <property type="method" value="EM"/>
    <property type="resolution" value="2.15 A"/>
    <property type="chains" value="LK=1-244"/>
</dbReference>
<dbReference type="PDB" id="8T2X">
    <property type="method" value="EM"/>
    <property type="resolution" value="2.46 A"/>
    <property type="chains" value="AF=1-244"/>
</dbReference>
<dbReference type="PDB" id="8T2Y">
    <property type="method" value="EM"/>
    <property type="resolution" value="2.20 A"/>
    <property type="chains" value="AF=1-244"/>
</dbReference>
<dbReference type="PDB" id="8T2Z">
    <property type="method" value="EM"/>
    <property type="resolution" value="2.40 A"/>
    <property type="chains" value="AF=1-244"/>
</dbReference>
<dbReference type="PDB" id="8T30">
    <property type="method" value="EM"/>
    <property type="resolution" value="2.88 A"/>
    <property type="chains" value="AF=1-244"/>
</dbReference>
<dbReference type="PDB" id="8T3A">
    <property type="method" value="EM"/>
    <property type="resolution" value="2.86 A"/>
    <property type="chains" value="AF=1-244"/>
</dbReference>
<dbReference type="PDB" id="8T3B">
    <property type="method" value="EM"/>
    <property type="resolution" value="3.08 A"/>
    <property type="chains" value="AF=1-244"/>
</dbReference>
<dbReference type="PDB" id="8T3C">
    <property type="method" value="EM"/>
    <property type="resolution" value="3.86 A"/>
    <property type="chains" value="AF=1-244"/>
</dbReference>
<dbReference type="PDB" id="8T3D">
    <property type="method" value="EM"/>
    <property type="resolution" value="2.95 A"/>
    <property type="chains" value="AF=1-244"/>
</dbReference>
<dbReference type="PDB" id="8T3E">
    <property type="method" value="EM"/>
    <property type="resolution" value="3.04 A"/>
    <property type="chains" value="AF=1-244"/>
</dbReference>
<dbReference type="PDB" id="8T3F">
    <property type="method" value="EM"/>
    <property type="resolution" value="3.09 A"/>
    <property type="chains" value="AF=1-244"/>
</dbReference>
<dbReference type="PDB" id="8UT0">
    <property type="method" value="EM"/>
    <property type="resolution" value="3.22 A"/>
    <property type="chains" value="LI=23-244"/>
</dbReference>
<dbReference type="PDB" id="8UTI">
    <property type="method" value="EM"/>
    <property type="resolution" value="3.13 A"/>
    <property type="chains" value="LI=23-244"/>
</dbReference>
<dbReference type="PDB" id="8V83">
    <property type="method" value="EM"/>
    <property type="resolution" value="2.53 A"/>
    <property type="chains" value="F=1-244"/>
</dbReference>
<dbReference type="PDB" id="8V84">
    <property type="method" value="EM"/>
    <property type="resolution" value="2.70 A"/>
    <property type="chains" value="F=1-244"/>
</dbReference>
<dbReference type="PDB" id="8V87">
    <property type="method" value="EM"/>
    <property type="resolution" value="2.66 A"/>
    <property type="chains" value="F=1-244"/>
</dbReference>
<dbReference type="PDB" id="8XU8">
    <property type="method" value="EM"/>
    <property type="resolution" value="3.40 A"/>
    <property type="chains" value="I=23-244"/>
</dbReference>
<dbReference type="PDB" id="8Y0U">
    <property type="method" value="EM"/>
    <property type="resolution" value="3.59 A"/>
    <property type="chains" value="LF=1-244"/>
</dbReference>
<dbReference type="PDB" id="8YLD">
    <property type="method" value="EM"/>
    <property type="resolution" value="3.90 A"/>
    <property type="chains" value="I=22-244"/>
</dbReference>
<dbReference type="PDB" id="8YLR">
    <property type="method" value="EM"/>
    <property type="resolution" value="3.90 A"/>
    <property type="chains" value="I=22-244"/>
</dbReference>
<dbReference type="PDB" id="8Z70">
    <property type="method" value="EM"/>
    <property type="resolution" value="3.20 A"/>
    <property type="chains" value="I=22-244"/>
</dbReference>
<dbReference type="PDB" id="8Z71">
    <property type="method" value="EM"/>
    <property type="resolution" value="3.60 A"/>
    <property type="chains" value="I=22-244"/>
</dbReference>
<dbReference type="PDB" id="9F9S">
    <property type="method" value="EM"/>
    <property type="resolution" value="2.90 A"/>
    <property type="chains" value="LB/MB=1-244"/>
</dbReference>
<dbReference type="PDBsum" id="3J6X"/>
<dbReference type="PDBsum" id="3J6Y"/>
<dbReference type="PDBsum" id="3J77"/>
<dbReference type="PDBsum" id="3J78"/>
<dbReference type="PDBsum" id="3JCT"/>
<dbReference type="PDBsum" id="4U3M"/>
<dbReference type="PDBsum" id="4U3N"/>
<dbReference type="PDBsum" id="4U3U"/>
<dbReference type="PDBsum" id="4U4N"/>
<dbReference type="PDBsum" id="4U4O"/>
<dbReference type="PDBsum" id="4U4Q"/>
<dbReference type="PDBsum" id="4U4R"/>
<dbReference type="PDBsum" id="4U4U"/>
<dbReference type="PDBsum" id="4U4Y"/>
<dbReference type="PDBsum" id="4U4Z"/>
<dbReference type="PDBsum" id="4U50"/>
<dbReference type="PDBsum" id="4U51"/>
<dbReference type="PDBsum" id="4U52"/>
<dbReference type="PDBsum" id="4U53"/>
<dbReference type="PDBsum" id="4U55"/>
<dbReference type="PDBsum" id="4U56"/>
<dbReference type="PDBsum" id="4U6F"/>
<dbReference type="PDBsum" id="4V4B"/>
<dbReference type="PDBsum" id="4V5Z"/>
<dbReference type="PDBsum" id="4V6I"/>
<dbReference type="PDBsum" id="4V7F"/>
<dbReference type="PDBsum" id="4V7R"/>
<dbReference type="PDBsum" id="4V88"/>
<dbReference type="PDBsum" id="4V8T"/>
<dbReference type="PDBsum" id="4V8Y"/>
<dbReference type="PDBsum" id="4V8Z"/>
<dbReference type="PDBsum" id="4V91"/>
<dbReference type="PDBsum" id="5APN"/>
<dbReference type="PDBsum" id="5APO"/>
<dbReference type="PDBsum" id="5DAT"/>
<dbReference type="PDBsum" id="5DC3"/>
<dbReference type="PDBsum" id="5DGE"/>
<dbReference type="PDBsum" id="5DGF"/>
<dbReference type="PDBsum" id="5DGV"/>
<dbReference type="PDBsum" id="5FCI"/>
<dbReference type="PDBsum" id="5FCJ"/>
<dbReference type="PDBsum" id="5GAK"/>
<dbReference type="PDBsum" id="5H4P"/>
<dbReference type="PDBsum" id="5I4L"/>
<dbReference type="PDBsum" id="5JCS"/>
<dbReference type="PDBsum" id="5JUO"/>
<dbReference type="PDBsum" id="5JUP"/>
<dbReference type="PDBsum" id="5JUS"/>
<dbReference type="PDBsum" id="5JUT"/>
<dbReference type="PDBsum" id="5JUU"/>
<dbReference type="PDBsum" id="5LYB"/>
<dbReference type="PDBsum" id="5M1J"/>
<dbReference type="PDBsum" id="5MC6"/>
<dbReference type="PDBsum" id="5MEI"/>
<dbReference type="PDBsum" id="5NDG"/>
<dbReference type="PDBsum" id="5NDV"/>
<dbReference type="PDBsum" id="5NDW"/>
<dbReference type="PDBsum" id="5OBM"/>
<dbReference type="PDBsum" id="5ON6"/>
<dbReference type="PDBsum" id="5T62"/>
<dbReference type="PDBsum" id="5T6R"/>
<dbReference type="PDBsum" id="5TBW"/>
<dbReference type="PDBsum" id="5TGA"/>
<dbReference type="PDBsum" id="5TGM"/>
<dbReference type="PDBsum" id="5Z3G"/>
<dbReference type="PDBsum" id="6C0F"/>
<dbReference type="PDBsum" id="6CB1"/>
<dbReference type="PDBsum" id="6ELZ"/>
<dbReference type="PDBsum" id="6EM1"/>
<dbReference type="PDBsum" id="6EM3"/>
<dbReference type="PDBsum" id="6EM4"/>
<dbReference type="PDBsum" id="6EM5"/>
<dbReference type="PDBsum" id="6FT6"/>
<dbReference type="PDBsum" id="6GQ1"/>
<dbReference type="PDBsum" id="6GQB"/>
<dbReference type="PDBsum" id="6GQV"/>
<dbReference type="PDBsum" id="6HD7"/>
<dbReference type="PDBsum" id="6HHQ"/>
<dbReference type="PDBsum" id="6I7O"/>
<dbReference type="PDBsum" id="6M62"/>
<dbReference type="PDBsum" id="6N8J"/>
<dbReference type="PDBsum" id="6N8K"/>
<dbReference type="PDBsum" id="6N8L"/>
<dbReference type="PDBsum" id="6N8M"/>
<dbReference type="PDBsum" id="6N8N"/>
<dbReference type="PDBsum" id="6N8O"/>
<dbReference type="PDBsum" id="6OIG"/>
<dbReference type="PDBsum" id="6Q8Y"/>
<dbReference type="PDBsum" id="6QIK"/>
<dbReference type="PDBsum" id="6QT0"/>
<dbReference type="PDBsum" id="6QTZ"/>
<dbReference type="PDBsum" id="6R84"/>
<dbReference type="PDBsum" id="6R86"/>
<dbReference type="PDBsum" id="6R87"/>
<dbReference type="PDBsum" id="6RI5"/>
<dbReference type="PDBsum" id="6RZZ"/>
<dbReference type="PDBsum" id="6S05"/>
<dbReference type="PDBsum" id="6S47"/>
<dbReference type="PDBsum" id="6SNT"/>
<dbReference type="PDBsum" id="6SV4"/>
<dbReference type="PDBsum" id="6T4Q"/>
<dbReference type="PDBsum" id="6T7I"/>
<dbReference type="PDBsum" id="6T7T"/>
<dbReference type="PDBsum" id="6T83"/>
<dbReference type="PDBsum" id="6TB3"/>
<dbReference type="PDBsum" id="6TNU"/>
<dbReference type="PDBsum" id="6WOO"/>
<dbReference type="PDBsum" id="6XIQ"/>
<dbReference type="PDBsum" id="6XIR"/>
<dbReference type="PDBsum" id="6YLG"/>
<dbReference type="PDBsum" id="6YLH"/>
<dbReference type="PDBsum" id="6YLX"/>
<dbReference type="PDBsum" id="6YLY"/>
<dbReference type="PDBsum" id="6Z6J"/>
<dbReference type="PDBsum" id="6Z6K"/>
<dbReference type="PDBsum" id="7AZY"/>
<dbReference type="PDBsum" id="7B7D"/>
<dbReference type="PDBsum" id="7BT6"/>
<dbReference type="PDBsum" id="7BTB"/>
<dbReference type="PDBsum" id="7MPI"/>
<dbReference type="PDBsum" id="7MPJ"/>
<dbReference type="PDBsum" id="7N8B"/>
<dbReference type="PDBsum" id="7NAC"/>
<dbReference type="PDBsum" id="7NRC"/>
<dbReference type="PDBsum" id="7NRD"/>
<dbReference type="PDBsum" id="7OF1"/>
<dbReference type="PDBsum" id="7OH3"/>
<dbReference type="PDBsum" id="7OHP"/>
<dbReference type="PDBsum" id="7OHQ"/>
<dbReference type="PDBsum" id="7OHR"/>
<dbReference type="PDBsum" id="7OHS"/>
<dbReference type="PDBsum" id="7OHT"/>
<dbReference type="PDBsum" id="7OHU"/>
<dbReference type="PDBsum" id="7OHV"/>
<dbReference type="PDBsum" id="7OHW"/>
<dbReference type="PDBsum" id="7OHX"/>
<dbReference type="PDBsum" id="7OHY"/>
<dbReference type="PDBsum" id="7OSA"/>
<dbReference type="PDBsum" id="7R7A"/>
<dbReference type="PDBsum" id="7TOO"/>
<dbReference type="PDBsum" id="7TOP"/>
<dbReference type="PDBsum" id="7U0H"/>
<dbReference type="PDBsum" id="7UG6"/>
<dbReference type="PDBsum" id="7UOO"/>
<dbReference type="PDBsum" id="7UQB"/>
<dbReference type="PDBsum" id="7UQZ"/>
<dbReference type="PDBsum" id="7V08"/>
<dbReference type="PDBsum" id="7Z34"/>
<dbReference type="PDBsum" id="7ZPQ"/>
<dbReference type="PDBsum" id="7ZRS"/>
<dbReference type="PDBsum" id="7ZS5"/>
<dbReference type="PDBsum" id="7ZUW"/>
<dbReference type="PDBsum" id="7ZUX"/>
<dbReference type="PDBsum" id="7ZW0"/>
<dbReference type="PDBsum" id="8AAF"/>
<dbReference type="PDBsum" id="8AGT"/>
<dbReference type="PDBsum" id="8AGU"/>
<dbReference type="PDBsum" id="8AGV"/>
<dbReference type="PDBsum" id="8AGW"/>
<dbReference type="PDBsum" id="8AGX"/>
<dbReference type="PDBsum" id="8AGZ"/>
<dbReference type="PDBsum" id="8BIP"/>
<dbReference type="PDBsum" id="8BJQ"/>
<dbReference type="PDBsum" id="8BN3"/>
<dbReference type="PDBsum" id="8BQD"/>
<dbReference type="PDBsum" id="8BQX"/>
<dbReference type="PDBsum" id="8CCS"/>
<dbReference type="PDBsum" id="8CDL"/>
<dbReference type="PDBsum" id="8CDR"/>
<dbReference type="PDBsum" id="8CEH"/>
<dbReference type="PDBsum" id="8CF5"/>
<dbReference type="PDBsum" id="8CG8"/>
<dbReference type="PDBsum" id="8CGN"/>
<dbReference type="PDBsum" id="8CIV"/>
<dbReference type="PDBsum" id="8CKU"/>
<dbReference type="PDBsum" id="8CMJ"/>
<dbReference type="PDBsum" id="8E5T"/>
<dbReference type="PDBsum" id="8EUB"/>
<dbReference type="PDBsum" id="8EVP"/>
<dbReference type="PDBsum" id="8EVQ"/>
<dbReference type="PDBsum" id="8EVR"/>
<dbReference type="PDBsum" id="8EVS"/>
<dbReference type="PDBsum" id="8EVT"/>
<dbReference type="PDBsum" id="8EWB"/>
<dbReference type="PDBsum" id="8EWC"/>
<dbReference type="PDBsum" id="8HFR"/>
<dbReference type="PDBsum" id="8K2D"/>
<dbReference type="PDBsum" id="8K82"/>
<dbReference type="PDBsum" id="8P4V"/>
<dbReference type="PDBsum" id="8P8M"/>
<dbReference type="PDBsum" id="8P8N"/>
<dbReference type="PDBsum" id="8P8U"/>
<dbReference type="PDBsum" id="8P9A"/>
<dbReference type="PDBsum" id="8PFR"/>
<dbReference type="PDBsum" id="8T2X"/>
<dbReference type="PDBsum" id="8T2Y"/>
<dbReference type="PDBsum" id="8T2Z"/>
<dbReference type="PDBsum" id="8T30"/>
<dbReference type="PDBsum" id="8T3A"/>
<dbReference type="PDBsum" id="8T3B"/>
<dbReference type="PDBsum" id="8T3C"/>
<dbReference type="PDBsum" id="8T3D"/>
<dbReference type="PDBsum" id="8T3E"/>
<dbReference type="PDBsum" id="8T3F"/>
<dbReference type="PDBsum" id="8UT0"/>
<dbReference type="PDBsum" id="8UTI"/>
<dbReference type="PDBsum" id="8V83"/>
<dbReference type="PDBsum" id="8V84"/>
<dbReference type="PDBsum" id="8V87"/>
<dbReference type="PDBsum" id="8XU8"/>
<dbReference type="PDBsum" id="8Y0U"/>
<dbReference type="PDBsum" id="8YLD"/>
<dbReference type="PDBsum" id="8YLR"/>
<dbReference type="PDBsum" id="8Z70"/>
<dbReference type="PDBsum" id="8Z71"/>
<dbReference type="PDBsum" id="9F9S"/>
<dbReference type="EMDB" id="EMD-0047"/>
<dbReference type="EMDB" id="EMD-0048"/>
<dbReference type="EMDB" id="EMD-0049"/>
<dbReference type="EMDB" id="EMD-0202"/>
<dbReference type="EMDB" id="EMD-0369"/>
<dbReference type="EMDB" id="EMD-0370"/>
<dbReference type="EMDB" id="EMD-0371"/>
<dbReference type="EMDB" id="EMD-0372"/>
<dbReference type="EMDB" id="EMD-0373"/>
<dbReference type="EMDB" id="EMD-0374"/>
<dbReference type="EMDB" id="EMD-10068"/>
<dbReference type="EMDB" id="EMD-10071"/>
<dbReference type="EMDB" id="EMD-10098"/>
<dbReference type="EMDB" id="EMD-10262"/>
<dbReference type="EMDB" id="EMD-10315"/>
<dbReference type="EMDB" id="EMD-10377"/>
<dbReference type="EMDB" id="EMD-10396"/>
<dbReference type="EMDB" id="EMD-10397"/>
<dbReference type="EMDB" id="EMD-10398"/>
<dbReference type="EMDB" id="EMD-10431"/>
<dbReference type="EMDB" id="EMD-10537"/>
<dbReference type="EMDB" id="EMD-10838"/>
<dbReference type="EMDB" id="EMD-10839"/>
<dbReference type="EMDB" id="EMD-10841"/>
<dbReference type="EMDB" id="EMD-10842"/>
<dbReference type="EMDB" id="EMD-11096"/>
<dbReference type="EMDB" id="EMD-11097"/>
<dbReference type="EMDB" id="EMD-11951"/>
<dbReference type="EMDB" id="EMD-12081"/>
<dbReference type="EMDB" id="EMD-12534"/>
<dbReference type="EMDB" id="EMD-12535"/>
<dbReference type="EMDB" id="EMD-12866"/>
<dbReference type="EMDB" id="EMD-12892"/>
<dbReference type="EMDB" id="EMD-12904"/>
<dbReference type="EMDB" id="EMD-12905"/>
<dbReference type="EMDB" id="EMD-12906"/>
<dbReference type="EMDB" id="EMD-12907"/>
<dbReference type="EMDB" id="EMD-12908"/>
<dbReference type="EMDB" id="EMD-12909"/>
<dbReference type="EMDB" id="EMD-12910"/>
<dbReference type="EMDB" id="EMD-12911"/>
<dbReference type="EMDB" id="EMD-12912"/>
<dbReference type="EMDB" id="EMD-12913"/>
<dbReference type="EMDB" id="EMD-14471"/>
<dbReference type="EMDB" id="EMD-14861"/>
<dbReference type="EMDB" id="EMD-14921"/>
<dbReference type="EMDB" id="EMD-14926"/>
<dbReference type="EMDB" id="EMD-14978"/>
<dbReference type="EMDB" id="EMD-14979"/>
<dbReference type="EMDB" id="EMD-14990"/>
<dbReference type="EMDB" id="EMD-15296"/>
<dbReference type="EMDB" id="EMD-15423"/>
<dbReference type="EMDB" id="EMD-15424"/>
<dbReference type="EMDB" id="EMD-15425"/>
<dbReference type="EMDB" id="EMD-15426"/>
<dbReference type="EMDB" id="EMD-15427"/>
<dbReference type="EMDB" id="EMD-15428"/>
<dbReference type="EMDB" id="EMD-16086"/>
<dbReference type="EMDB" id="EMD-16090"/>
<dbReference type="EMDB" id="EMD-16127"/>
<dbReference type="EMDB" id="EMD-16182"/>
<dbReference type="EMDB" id="EMD-16191"/>
<dbReference type="EMDB" id="EMD-16563"/>
<dbReference type="EMDB" id="EMD-16591"/>
<dbReference type="EMDB" id="EMD-16594"/>
<dbReference type="EMDB" id="EMD-16609"/>
<dbReference type="EMDB" id="EMD-16616"/>
<dbReference type="EMDB" id="EMD-16634"/>
<dbReference type="EMDB" id="EMD-16648"/>
<dbReference type="EMDB" id="EMD-16684"/>
<dbReference type="EMDB" id="EMD-16702"/>
<dbReference type="EMDB" id="EMD-16729"/>
<dbReference type="EMDB" id="EMD-17549"/>
<dbReference type="EMDB" id="EMD-17550"/>
<dbReference type="EMDB" id="EMD-17552"/>
<dbReference type="EMDB" id="EMD-17653"/>
<dbReference type="EMDB" id="EMD-20077"/>
<dbReference type="EMDB" id="EMD-21859"/>
<dbReference type="EMDB" id="EMD-22196"/>
<dbReference type="EMDB" id="EMD-22198"/>
<dbReference type="EMDB" id="EMD-23934"/>
<dbReference type="EMDB" id="EMD-23935"/>
<dbReference type="EMDB" id="EMD-24235"/>
<dbReference type="EMDB" id="EMD-24269"/>
<dbReference type="EMDB" id="EMD-24296"/>
<dbReference type="EMDB" id="EMD-26033"/>
<dbReference type="EMDB" id="EMD-26034"/>
<dbReference type="EMDB" id="EMD-26259"/>
<dbReference type="EMDB" id="EMD-26485"/>
<dbReference type="EMDB" id="EMD-26651"/>
<dbReference type="EMDB" id="EMD-26686"/>
<dbReference type="EMDB" id="EMD-26703"/>
<dbReference type="EMDB" id="EMD-26941"/>
<dbReference type="EMDB" id="EMD-27919"/>
<dbReference type="EMDB" id="EMD-28610"/>
<dbReference type="EMDB" id="EMD-28632"/>
<dbReference type="EMDB" id="EMD-28633"/>
<dbReference type="EMDB" id="EMD-28634"/>
<dbReference type="EMDB" id="EMD-28635"/>
<dbReference type="EMDB" id="EMD-28636"/>
<dbReference type="EMDB" id="EMD-28642"/>
<dbReference type="EMDB" id="EMD-28643"/>
<dbReference type="EMDB" id="EMD-30108"/>
<dbReference type="EMDB" id="EMD-30170"/>
<dbReference type="EMDB" id="EMD-30174"/>
<dbReference type="EMDB" id="EMD-3461"/>
<dbReference type="EMDB" id="EMD-34725"/>
<dbReference type="EMDB" id="EMD-36839"/>
<dbReference type="EMDB" id="EMD-36945"/>
<dbReference type="EMDB" id="EMD-38660"/>
<dbReference type="EMDB" id="EMD-40990"/>
<dbReference type="EMDB" id="EMD-40991"/>
<dbReference type="EMDB" id="EMD-40992"/>
<dbReference type="EMDB" id="EMD-40993"/>
<dbReference type="EMDB" id="EMD-40997"/>
<dbReference type="EMDB" id="EMD-40998"/>
<dbReference type="EMDB" id="EMD-40999"/>
<dbReference type="EMDB" id="EMD-41000"/>
<dbReference type="EMDB" id="EMD-41001"/>
<dbReference type="EMDB" id="EMD-41002"/>
<dbReference type="EMDB" id="EMD-4140"/>
<dbReference type="EMDB" id="EMD-42525"/>
<dbReference type="EMDB" id="EMD-42540"/>
<dbReference type="EMDB" id="EMD-43017"/>
<dbReference type="EMDB" id="EMD-4302"/>
<dbReference type="EMDB" id="EMD-43021"/>
<dbReference type="EMDB" id="EMD-43027"/>
<dbReference type="EMDB" id="EMD-4427"/>
<dbReference type="EMDB" id="EMD-4474"/>
<dbReference type="EMDB" id="EMD-4560"/>
<dbReference type="EMDB" id="EMD-4630"/>
<dbReference type="EMDB" id="EMD-4636"/>
<dbReference type="EMDB" id="EMD-4751"/>
<dbReference type="EMDB" id="EMD-4752"/>
<dbReference type="EMDB" id="EMD-4753"/>
<dbReference type="EMDB" id="EMD-4884"/>
<dbReference type="EMDB" id="EMD-50259"/>
<dbReference type="EMDB" id="EMD-6878"/>
<dbReference type="EMDB" id="EMD-7324"/>
<dbReference type="EMDB" id="EMD-8362"/>
<dbReference type="EMDB" id="EMD-8368"/>
<dbReference type="SMR" id="P05737"/>
<dbReference type="BioGRID" id="33174">
    <property type="interactions" value="276"/>
</dbReference>
<dbReference type="ComplexPortal" id="CPX-1601">
    <property type="entry name" value="60S cytosolic large ribosomal subunit"/>
</dbReference>
<dbReference type="DIP" id="DIP-7124N"/>
<dbReference type="FunCoup" id="P05737">
    <property type="interactions" value="1575"/>
</dbReference>
<dbReference type="IntAct" id="P05737">
    <property type="interactions" value="272"/>
</dbReference>
<dbReference type="MINT" id="P05737"/>
<dbReference type="STRING" id="4932.YGL076C"/>
<dbReference type="CarbonylDB" id="P05737"/>
<dbReference type="iPTMnet" id="P05737"/>
<dbReference type="PaxDb" id="4932-YGL076C"/>
<dbReference type="PeptideAtlas" id="P05737"/>
<dbReference type="TopDownProteomics" id="P05737"/>
<dbReference type="EnsemblFungi" id="YGL076C_mRNA">
    <property type="protein sequence ID" value="YGL076C"/>
    <property type="gene ID" value="YGL076C"/>
</dbReference>
<dbReference type="GeneID" id="852804"/>
<dbReference type="KEGG" id="sce:YGL076C"/>
<dbReference type="AGR" id="SGD:S000003044"/>
<dbReference type="SGD" id="S000003044">
    <property type="gene designation" value="RPL7A"/>
</dbReference>
<dbReference type="VEuPathDB" id="FungiDB:YGL076C"/>
<dbReference type="eggNOG" id="KOG3184">
    <property type="taxonomic scope" value="Eukaryota"/>
</dbReference>
<dbReference type="GeneTree" id="ENSGT00950000182878"/>
<dbReference type="HOGENOM" id="CLU_055156_0_2_1"/>
<dbReference type="InParanoid" id="P05737"/>
<dbReference type="OMA" id="SYYVDAQ"/>
<dbReference type="OrthoDB" id="28644at2759"/>
<dbReference type="BioCyc" id="YEAST:G3O-30577-MONOMER"/>
<dbReference type="Reactome" id="R-SCE-156827">
    <property type="pathway name" value="L13a-mediated translational silencing of Ceruloplasmin expression"/>
</dbReference>
<dbReference type="Reactome" id="R-SCE-1799339">
    <property type="pathway name" value="SRP-dependent cotranslational protein targeting to membrane"/>
</dbReference>
<dbReference type="Reactome" id="R-SCE-72689">
    <property type="pathway name" value="Formation of a pool of free 40S subunits"/>
</dbReference>
<dbReference type="Reactome" id="R-SCE-72706">
    <property type="pathway name" value="GTP hydrolysis and joining of the 60S ribosomal subunit"/>
</dbReference>
<dbReference type="Reactome" id="R-SCE-975956">
    <property type="pathway name" value="Nonsense Mediated Decay (NMD) independent of the Exon Junction Complex (EJC)"/>
</dbReference>
<dbReference type="Reactome" id="R-SCE-975957">
    <property type="pathway name" value="Nonsense Mediated Decay (NMD) enhanced by the Exon Junction Complex (EJC)"/>
</dbReference>
<dbReference type="BioGRID-ORCS" id="852804">
    <property type="hits" value="0 hits in 10 CRISPR screens"/>
</dbReference>
<dbReference type="PRO" id="PR:P05737"/>
<dbReference type="Proteomes" id="UP000002311">
    <property type="component" value="Chromosome VII"/>
</dbReference>
<dbReference type="RNAct" id="P05737">
    <property type="molecule type" value="protein"/>
</dbReference>
<dbReference type="GO" id="GO:0005737">
    <property type="term" value="C:cytoplasm"/>
    <property type="evidence" value="ECO:0000314"/>
    <property type="project" value="SGD"/>
</dbReference>
<dbReference type="GO" id="GO:0005829">
    <property type="term" value="C:cytosol"/>
    <property type="evidence" value="ECO:0000304"/>
    <property type="project" value="Reactome"/>
</dbReference>
<dbReference type="GO" id="GO:0022625">
    <property type="term" value="C:cytosolic large ribosomal subunit"/>
    <property type="evidence" value="ECO:0000314"/>
    <property type="project" value="SGD"/>
</dbReference>
<dbReference type="GO" id="GO:0003723">
    <property type="term" value="F:RNA binding"/>
    <property type="evidence" value="ECO:0000318"/>
    <property type="project" value="GO_Central"/>
</dbReference>
<dbReference type="GO" id="GO:0003735">
    <property type="term" value="F:structural constituent of ribosome"/>
    <property type="evidence" value="ECO:0000314"/>
    <property type="project" value="SGD"/>
</dbReference>
<dbReference type="GO" id="GO:0002181">
    <property type="term" value="P:cytoplasmic translation"/>
    <property type="evidence" value="ECO:0000314"/>
    <property type="project" value="SGD"/>
</dbReference>
<dbReference type="GO" id="GO:0000470">
    <property type="term" value="P:maturation of LSU-rRNA"/>
    <property type="evidence" value="ECO:0000315"/>
    <property type="project" value="SGD"/>
</dbReference>
<dbReference type="GO" id="GO:0000463">
    <property type="term" value="P:maturation of LSU-rRNA from tricistronic rRNA transcript (SSU-rRNA, 5.8S rRNA, LSU-rRNA)"/>
    <property type="evidence" value="ECO:0000318"/>
    <property type="project" value="GO_Central"/>
</dbReference>
<dbReference type="GO" id="GO:0042273">
    <property type="term" value="P:ribosomal large subunit biogenesis"/>
    <property type="evidence" value="ECO:0000314"/>
    <property type="project" value="SGD"/>
</dbReference>
<dbReference type="CDD" id="cd01657">
    <property type="entry name" value="Ribosomal_L7_archeal_euk"/>
    <property type="match status" value="1"/>
</dbReference>
<dbReference type="FunFam" id="3.30.1390.20:FF:000002">
    <property type="entry name" value="60S ribosomal protein L7"/>
    <property type="match status" value="1"/>
</dbReference>
<dbReference type="FunFam" id="3.30.1390.20:FF:000003">
    <property type="entry name" value="60S ribosomal protein L7"/>
    <property type="match status" value="1"/>
</dbReference>
<dbReference type="Gene3D" id="3.30.1390.20">
    <property type="entry name" value="Ribosomal protein L30, ferredoxin-like fold domain"/>
    <property type="match status" value="2"/>
</dbReference>
<dbReference type="InterPro" id="IPR036919">
    <property type="entry name" value="Ribo_uL30_ferredoxin-like_sf"/>
</dbReference>
<dbReference type="InterPro" id="IPR039699">
    <property type="entry name" value="Ribosomal_uL30"/>
</dbReference>
<dbReference type="InterPro" id="IPR018038">
    <property type="entry name" value="Ribosomal_uL30_CS"/>
</dbReference>
<dbReference type="InterPro" id="IPR005998">
    <property type="entry name" value="Ribosomal_uL30_euk"/>
</dbReference>
<dbReference type="InterPro" id="IPR035808">
    <property type="entry name" value="Ribosomal_uL30_euk_arc"/>
</dbReference>
<dbReference type="InterPro" id="IPR016082">
    <property type="entry name" value="Ribosomal_uL30_ferredoxin-like"/>
</dbReference>
<dbReference type="InterPro" id="IPR012988">
    <property type="entry name" value="Ribosomal_uL30_N_euk"/>
</dbReference>
<dbReference type="NCBIfam" id="TIGR01310">
    <property type="entry name" value="uL30_euk"/>
    <property type="match status" value="1"/>
</dbReference>
<dbReference type="PANTHER" id="PTHR11524">
    <property type="entry name" value="60S RIBOSOMAL PROTEIN L7"/>
    <property type="match status" value="1"/>
</dbReference>
<dbReference type="PANTHER" id="PTHR11524:SF16">
    <property type="entry name" value="LARGE RIBOSOMAL SUBUNIT PROTEIN UL30"/>
    <property type="match status" value="1"/>
</dbReference>
<dbReference type="Pfam" id="PF00327">
    <property type="entry name" value="Ribosomal_L30"/>
    <property type="match status" value="1"/>
</dbReference>
<dbReference type="Pfam" id="PF08079">
    <property type="entry name" value="Ribosomal_L30_N"/>
    <property type="match status" value="1"/>
</dbReference>
<dbReference type="SUPFAM" id="SSF55129">
    <property type="entry name" value="Ribosomal protein L30p/L7e"/>
    <property type="match status" value="1"/>
</dbReference>
<dbReference type="PROSITE" id="PS00634">
    <property type="entry name" value="RIBOSOMAL_L30"/>
    <property type="match status" value="1"/>
</dbReference>
<gene>
    <name evidence="9" type="primary">RPL7A</name>
    <name type="synonym">RPL6A</name>
    <name type="synonym">RPL8A</name>
    <name type="synonym">YL8A</name>
    <name type="ordered locus">YGL076C</name>
</gene>
<feature type="initiator methionine" description="Removed" evidence="2 5 6">
    <location>
        <position position="1"/>
    </location>
</feature>
<feature type="chain" id="PRO_0000104651" description="Large ribosomal subunit protein uL30A">
    <location>
        <begin position="2"/>
        <end position="244"/>
    </location>
</feature>
<feature type="region of interest" description="Disordered" evidence="1">
    <location>
        <begin position="1"/>
        <end position="26"/>
    </location>
</feature>
<feature type="helix" evidence="13">
    <location>
        <begin position="12"/>
        <end position="72"/>
    </location>
</feature>
<feature type="strand" evidence="13">
    <location>
        <begin position="83"/>
        <end position="88"/>
    </location>
</feature>
<feature type="strand" evidence="13">
    <location>
        <begin position="92"/>
        <end position="94"/>
    </location>
</feature>
<feature type="helix" evidence="13">
    <location>
        <begin position="97"/>
        <end position="105"/>
    </location>
</feature>
<feature type="strand" evidence="13">
    <location>
        <begin position="113"/>
        <end position="118"/>
    </location>
</feature>
<feature type="helix" evidence="13">
    <location>
        <begin position="121"/>
        <end position="129"/>
    </location>
</feature>
<feature type="helix" evidence="13">
    <location>
        <begin position="131"/>
        <end position="133"/>
    </location>
</feature>
<feature type="strand" evidence="13">
    <location>
        <begin position="134"/>
        <end position="137"/>
    </location>
</feature>
<feature type="helix" evidence="13">
    <location>
        <begin position="141"/>
        <end position="150"/>
    </location>
</feature>
<feature type="strand" evidence="13">
    <location>
        <begin position="153"/>
        <end position="162"/>
    </location>
</feature>
<feature type="helix" evidence="13">
    <location>
        <begin position="166"/>
        <end position="173"/>
    </location>
</feature>
<feature type="helix" evidence="13">
    <location>
        <begin position="174"/>
        <end position="176"/>
    </location>
</feature>
<feature type="helix" evidence="13">
    <location>
        <begin position="181"/>
        <end position="189"/>
    </location>
</feature>
<feature type="helix" evidence="13">
    <location>
        <begin position="195"/>
        <end position="201"/>
    </location>
</feature>
<feature type="strand" evidence="13">
    <location>
        <begin position="215"/>
        <end position="217"/>
    </location>
</feature>
<feature type="strand" evidence="13">
    <location>
        <begin position="220"/>
        <end position="222"/>
    </location>
</feature>
<feature type="helix" evidence="13">
    <location>
        <begin position="223"/>
        <end position="225"/>
    </location>
</feature>
<feature type="strand" evidence="13">
    <location>
        <begin position="228"/>
        <end position="233"/>
    </location>
</feature>
<feature type="helix" evidence="13">
    <location>
        <begin position="236"/>
        <end position="243"/>
    </location>
</feature>
<proteinExistence type="evidence at protein level"/>
<protein>
    <recommendedName>
        <fullName evidence="8">Large ribosomal subunit protein uL30A</fullName>
    </recommendedName>
    <alternativeName>
        <fullName evidence="9">60S ribosomal protein L7-A</fullName>
    </alternativeName>
    <alternativeName>
        <fullName>L6</fullName>
    </alternativeName>
    <alternativeName>
        <fullName>RP11</fullName>
    </alternativeName>
    <alternativeName>
        <fullName>YL8</fullName>
    </alternativeName>
</protein>
<sequence>MAAEKILTPESQLKKSKAQQKTAEQVAAERAARKAANKEKRAIILERNAAYQKEYETAERNIIQAKRDAKAAGSYYVEAQHKLVFVVRIKGINKIPPKPRKVLQLLRLTRINSGTFVKVTKATLELLKLIEPYVAYGYPSYSTIRQLVYKRGFGKINKQRVPLSDNAIIEANLGKYGILSIDDLIHEIITVGPHFKQANNFLWPFKLSNPSGGWGVPRKFKHFIQGGSFGNREEFINKLVKSMN</sequence>
<evidence type="ECO:0000256" key="1">
    <source>
        <dbReference type="SAM" id="MobiDB-lite"/>
    </source>
</evidence>
<evidence type="ECO:0000269" key="2">
    <source>
    </source>
</evidence>
<evidence type="ECO:0000269" key="3">
    <source>
    </source>
</evidence>
<evidence type="ECO:0000269" key="4">
    <source>
    </source>
</evidence>
<evidence type="ECO:0000269" key="5">
    <source>
    </source>
</evidence>
<evidence type="ECO:0000269" key="6">
    <source>
    </source>
</evidence>
<evidence type="ECO:0000269" key="7">
    <source>
    </source>
</evidence>
<evidence type="ECO:0000303" key="8">
    <source>
    </source>
</evidence>
<evidence type="ECO:0000303" key="9">
    <source>
    </source>
</evidence>
<evidence type="ECO:0000305" key="10"/>
<evidence type="ECO:0000305" key="11">
    <source>
    </source>
</evidence>
<evidence type="ECO:0000305" key="12">
    <source>
    </source>
</evidence>
<evidence type="ECO:0007829" key="13">
    <source>
        <dbReference type="PDB" id="6EM3"/>
    </source>
</evidence>
<reference key="1">
    <citation type="journal article" date="1992" name="Nucleic Acids Res.">
        <title>Yeast ribosomal proteins: XIII. Saccharomyces cerevisiae YL8A gene, interrupted with two introns, encodes a homolog of mammalian L7.</title>
        <authorList>
            <person name="Mizuta K."/>
            <person name="Hashimoto T."/>
            <person name="Otaka E."/>
        </authorList>
    </citation>
    <scope>NUCLEOTIDE SEQUENCE [GENOMIC DNA]</scope>
</reference>
<reference key="2">
    <citation type="journal article" date="1997" name="Yeast">
        <title>Sequence analysis of 203 kilobases from Saccharomyces cerevisiae chromosome VII.</title>
        <authorList>
            <person name="Rieger M."/>
            <person name="Brueckner M."/>
            <person name="Schaefer M."/>
            <person name="Mueller-Auer S."/>
        </authorList>
    </citation>
    <scope>NUCLEOTIDE SEQUENCE [GENOMIC DNA]</scope>
    <source>
        <strain>ATCC 204508 / S288c</strain>
    </source>
</reference>
<reference key="3">
    <citation type="journal article" date="1997" name="Nature">
        <title>The nucleotide sequence of Saccharomyces cerevisiae chromosome VII.</title>
        <authorList>
            <person name="Tettelin H."/>
            <person name="Agostoni-Carbone M.L."/>
            <person name="Albermann K."/>
            <person name="Albers M."/>
            <person name="Arroyo J."/>
            <person name="Backes U."/>
            <person name="Barreiros T."/>
            <person name="Bertani I."/>
            <person name="Bjourson A.J."/>
            <person name="Brueckner M."/>
            <person name="Bruschi C.V."/>
            <person name="Carignani G."/>
            <person name="Castagnoli L."/>
            <person name="Cerdan E."/>
            <person name="Clemente M.L."/>
            <person name="Coblenz A."/>
            <person name="Coglievina M."/>
            <person name="Coissac E."/>
            <person name="Defoor E."/>
            <person name="Del Bino S."/>
            <person name="Delius H."/>
            <person name="Delneri D."/>
            <person name="de Wergifosse P."/>
            <person name="Dujon B."/>
            <person name="Durand P."/>
            <person name="Entian K.-D."/>
            <person name="Eraso P."/>
            <person name="Escribano V."/>
            <person name="Fabiani L."/>
            <person name="Fartmann B."/>
            <person name="Feroli F."/>
            <person name="Feuermann M."/>
            <person name="Frontali L."/>
            <person name="Garcia-Gonzalez M."/>
            <person name="Garcia-Saez M.I."/>
            <person name="Goffeau A."/>
            <person name="Guerreiro P."/>
            <person name="Hani J."/>
            <person name="Hansen M."/>
            <person name="Hebling U."/>
            <person name="Hernandez K."/>
            <person name="Heumann K."/>
            <person name="Hilger F."/>
            <person name="Hofmann B."/>
            <person name="Indge K.J."/>
            <person name="James C.M."/>
            <person name="Klima R."/>
            <person name="Koetter P."/>
            <person name="Kramer B."/>
            <person name="Kramer W."/>
            <person name="Lauquin G."/>
            <person name="Leuther H."/>
            <person name="Louis E.J."/>
            <person name="Maillier E."/>
            <person name="Marconi A."/>
            <person name="Martegani E."/>
            <person name="Mazon M.J."/>
            <person name="Mazzoni C."/>
            <person name="McReynolds A.D.K."/>
            <person name="Melchioretto P."/>
            <person name="Mewes H.-W."/>
            <person name="Minenkova O."/>
            <person name="Mueller-Auer S."/>
            <person name="Nawrocki A."/>
            <person name="Netter P."/>
            <person name="Neu R."/>
            <person name="Nombela C."/>
            <person name="Oliver S.G."/>
            <person name="Panzeri L."/>
            <person name="Paoluzi S."/>
            <person name="Plevani P."/>
            <person name="Portetelle D."/>
            <person name="Portillo F."/>
            <person name="Potier S."/>
            <person name="Purnelle B."/>
            <person name="Rieger M."/>
            <person name="Riles L."/>
            <person name="Rinaldi T."/>
            <person name="Robben J."/>
            <person name="Rodrigues-Pousada C."/>
            <person name="Rodriguez-Belmonte E."/>
            <person name="Rodriguez-Torres A.M."/>
            <person name="Rose M."/>
            <person name="Ruzzi M."/>
            <person name="Saliola M."/>
            <person name="Sanchez-Perez M."/>
            <person name="Schaefer B."/>
            <person name="Schaefer M."/>
            <person name="Scharfe M."/>
            <person name="Schmidheini T."/>
            <person name="Schreer A."/>
            <person name="Skala J."/>
            <person name="Souciet J.-L."/>
            <person name="Steensma H.Y."/>
            <person name="Talla E."/>
            <person name="Thierry A."/>
            <person name="Vandenbol M."/>
            <person name="van der Aart Q.J.M."/>
            <person name="Van Dyck L."/>
            <person name="Vanoni M."/>
            <person name="Verhasselt P."/>
            <person name="Voet M."/>
            <person name="Volckaert G."/>
            <person name="Wambutt R."/>
            <person name="Watson M.D."/>
            <person name="Weber N."/>
            <person name="Wedler E."/>
            <person name="Wedler H."/>
            <person name="Wipfli P."/>
            <person name="Wolf K."/>
            <person name="Wright L.F."/>
            <person name="Zaccaria P."/>
            <person name="Zimmermann M."/>
            <person name="Zollner A."/>
            <person name="Kleine K."/>
        </authorList>
    </citation>
    <scope>NUCLEOTIDE SEQUENCE [LARGE SCALE GENOMIC DNA]</scope>
    <source>
        <strain>ATCC 204508 / S288c</strain>
    </source>
</reference>
<reference key="4">
    <citation type="journal article" date="2014" name="G3 (Bethesda)">
        <title>The reference genome sequence of Saccharomyces cerevisiae: Then and now.</title>
        <authorList>
            <person name="Engel S.R."/>
            <person name="Dietrich F.S."/>
            <person name="Fisk D.G."/>
            <person name="Binkley G."/>
            <person name="Balakrishnan R."/>
            <person name="Costanzo M.C."/>
            <person name="Dwight S.S."/>
            <person name="Hitz B.C."/>
            <person name="Karra K."/>
            <person name="Nash R.S."/>
            <person name="Weng S."/>
            <person name="Wong E.D."/>
            <person name="Lloyd P."/>
            <person name="Skrzypek M.S."/>
            <person name="Miyasato S.R."/>
            <person name="Simison M."/>
            <person name="Cherry J.M."/>
        </authorList>
    </citation>
    <scope>GENOME REANNOTATION</scope>
    <source>
        <strain>ATCC 204508 / S288c</strain>
    </source>
</reference>
<reference key="5">
    <citation type="journal article" date="1984" name="Mol. Gen. Genet.">
        <title>Yeast ribosomal proteins. VIII. Isolation of two proteins and sequence characterization of twenty-four proteins from cytoplasmic ribosomes.</title>
        <authorList>
            <person name="Otaka E."/>
            <person name="Higo K."/>
            <person name="Itoh T."/>
        </authorList>
    </citation>
    <scope>PARTIAL PROTEIN SEQUENCE OF 2-41</scope>
    <scope>CLEAVAGE OF INITIATOR METHIONINE</scope>
</reference>
<reference key="6">
    <citation type="journal article" date="1992" name="J. Biol. Chem.">
        <title>NH2-terminal acetylation of ribosomal proteins of Saccharomyces cerevisiae.</title>
        <authorList>
            <person name="Takakura H."/>
            <person name="Tsunasawa S."/>
            <person name="Miyagi M."/>
            <person name="Warner J.R."/>
        </authorList>
    </citation>
    <scope>PROTEIN SEQUENCE OF 2-21</scope>
</reference>
<reference key="7">
    <citation type="journal article" date="1998" name="Yeast">
        <title>The list of cytoplasmic ribosomal proteins of Saccharomyces cerevisiae.</title>
        <authorList>
            <person name="Planta R.J."/>
            <person name="Mager W.H."/>
        </authorList>
    </citation>
    <scope>NOMENCLATURE</scope>
    <scope>SUBUNIT</scope>
</reference>
<reference key="8">
    <citation type="journal article" date="1999" name="J. Biol. Chem.">
        <title>The action of N-terminal acetyltransferases on yeast ribosomal proteins.</title>
        <authorList>
            <person name="Arnold R.J."/>
            <person name="Polevoda B."/>
            <person name="Reilly J.P."/>
            <person name="Sherman F."/>
        </authorList>
    </citation>
    <scope>CLEAVAGE OF INITIATOR METHIONINE</scope>
</reference>
<reference key="9">
    <citation type="journal article" date="2003" name="Nature">
        <title>Global analysis of protein localization in budding yeast.</title>
        <authorList>
            <person name="Huh W.-K."/>
            <person name="Falvo J.V."/>
            <person name="Gerke L.C."/>
            <person name="Carroll A.S."/>
            <person name="Howson R.W."/>
            <person name="Weissman J.S."/>
            <person name="O'Shea E.K."/>
        </authorList>
    </citation>
    <scope>SUBCELLULAR LOCATION [LARGE SCALE ANALYSIS]</scope>
</reference>
<reference key="10">
    <citation type="journal article" date="2003" name="Nature">
        <title>Global analysis of protein expression in yeast.</title>
        <authorList>
            <person name="Ghaemmaghami S."/>
            <person name="Huh W.-K."/>
            <person name="Bower K."/>
            <person name="Howson R.W."/>
            <person name="Belle A."/>
            <person name="Dephoure N."/>
            <person name="O'Shea E.K."/>
            <person name="Weissman J.S."/>
        </authorList>
    </citation>
    <scope>LEVEL OF PROTEIN EXPRESSION [LARGE SCALE ANALYSIS]</scope>
</reference>
<reference key="11">
    <citation type="journal article" date="2012" name="Proc. Natl. Acad. Sci. U.S.A.">
        <title>N-terminal acetylome analyses and functional insights of the N-terminal acetyltransferase NatB.</title>
        <authorList>
            <person name="Van Damme P."/>
            <person name="Lasa M."/>
            <person name="Polevoda B."/>
            <person name="Gazquez C."/>
            <person name="Elosegui-Artola A."/>
            <person name="Kim D.S."/>
            <person name="De Juan-Pardo E."/>
            <person name="Demeyer K."/>
            <person name="Hole K."/>
            <person name="Larrea E."/>
            <person name="Timmerman E."/>
            <person name="Prieto J."/>
            <person name="Arnesen T."/>
            <person name="Sherman F."/>
            <person name="Gevaert K."/>
            <person name="Aldabe R."/>
        </authorList>
    </citation>
    <scope>IDENTIFICATION BY MASS SPECTROMETRY [LARGE SCALE ANALYSIS]</scope>
</reference>
<reference key="12">
    <citation type="journal article" date="2014" name="Curr. Opin. Struct. Biol.">
        <title>A new system for naming ribosomal proteins.</title>
        <authorList>
            <person name="Ban N."/>
            <person name="Beckmann R."/>
            <person name="Cate J.H.D."/>
            <person name="Dinman J.D."/>
            <person name="Dragon F."/>
            <person name="Ellis S.R."/>
            <person name="Lafontaine D.L.J."/>
            <person name="Lindahl L."/>
            <person name="Liljas A."/>
            <person name="Lipton J.M."/>
            <person name="McAlear M.A."/>
            <person name="Moore P.B."/>
            <person name="Noller H.F."/>
            <person name="Ortega J."/>
            <person name="Panse V.G."/>
            <person name="Ramakrishnan V."/>
            <person name="Spahn C.M.T."/>
            <person name="Steitz T.A."/>
            <person name="Tchorzewski M."/>
            <person name="Tollervey D."/>
            <person name="Warren A.J."/>
            <person name="Williamson J.R."/>
            <person name="Wilson D."/>
            <person name="Yonath A."/>
            <person name="Yusupov M."/>
        </authorList>
    </citation>
    <scope>NOMENCLATURE</scope>
</reference>
<reference key="13">
    <citation type="journal article" date="2001" name="Cell">
        <title>Structure of the 80S ribosome from Saccharomyces cerevisiae -- tRNA-ribosome and subunit-subunit interactions.</title>
        <authorList>
            <person name="Spahn C.M.T."/>
            <person name="Beckmann R."/>
            <person name="Eswar N."/>
            <person name="Penczek P.A."/>
            <person name="Sali A."/>
            <person name="Blobel G."/>
            <person name="Frank J."/>
        </authorList>
    </citation>
    <scope>3D-STRUCTURE MODELING OF 83-243</scope>
    <scope>ELECTRON MICROSCOPY</scope>
</reference>
<reference key="14">
    <citation type="journal article" date="2004" name="EMBO J.">
        <title>Domain movements of elongation factor eEF2 and the eukaryotic 80S ribosome facilitate tRNA translocation.</title>
        <authorList>
            <person name="Spahn C.M.T."/>
            <person name="Gomez-Lorenzo M.G."/>
            <person name="Grassucci R.A."/>
            <person name="Joergensen R."/>
            <person name="Andersen G.R."/>
            <person name="Beckmann R."/>
            <person name="Penczek P.A."/>
            <person name="Ballesta J.P.G."/>
            <person name="Frank J."/>
        </authorList>
    </citation>
    <scope>3D-STRUCTURE MODELING OF 83-244</scope>
    <scope>ELECTRON MICROSCOPY</scope>
</reference>
<reference key="15">
    <citation type="journal article" date="2010" name="Science">
        <title>Crystal structure of the eukaryotic ribosome.</title>
        <authorList>
            <person name="Ben-Shem A."/>
            <person name="Jenner L."/>
            <person name="Yusupova G."/>
            <person name="Yusupov M."/>
        </authorList>
    </citation>
    <scope>X-RAY CRYSTALLOGRAPHY (4.0 ANGSTROMS) OF 80S RIBOSOME</scope>
</reference>
<reference key="16">
    <citation type="journal article" date="2011" name="Science">
        <title>The structure of the eukaryotic ribosome at 3.0 A resolution.</title>
        <authorList>
            <person name="Ben-Shem A."/>
            <person name="Garreau de Loubresse N."/>
            <person name="Melnikov S."/>
            <person name="Jenner L."/>
            <person name="Yusupova G."/>
            <person name="Yusupov M."/>
        </authorList>
    </citation>
    <scope>X-RAY CRYSTALLOGRAPHY (3.0 ANGSTROMS) OF 80S RIBOSOME</scope>
    <scope>SUBUNIT</scope>
    <scope>SUBCELLULAR LOCATION</scope>
</reference>
<comment type="function">
    <text evidence="11">Component of the ribosome, a large ribonucleoprotein complex responsible for the synthesis of proteins in the cell. The small ribosomal subunit (SSU) binds messenger RNAs (mRNAs) and translates the encoded message by selecting cognate aminoacyl-transfer RNA (tRNA) molecules. The large subunit (LSU) contains the ribosomal catalytic site termed the peptidyl transferase center (PTC), which catalyzes the formation of peptide bonds, thereby polymerizing the amino acids delivered by tRNAs into a polypeptide chain. The nascent polypeptides leave the ribosome through a tunnel in the LSU and interact with protein factors that function in enzymatic processing, targeting, and the membrane insertion of nascent chains at the exit of the ribosomal tunnel.</text>
</comment>
<comment type="subunit">
    <text evidence="7 12">Component of the large ribosomal subunit (LSU). Mature yeast ribosomes consist of a small (40S) and a large (60S) subunit. The 40S small subunit contains 1 molecule of ribosomal RNA (18S rRNA) and 33 different proteins (encoded by 57 genes). The large 60S subunit contains 3 rRNA molecules (25S, 5.8S and 5S rRNA) and 46 different proteins (encoded by 81 genes) (PubMed:22096102, PubMed:9559554).</text>
</comment>
<comment type="subcellular location">
    <subcellularLocation>
        <location evidence="3 7">Cytoplasm</location>
    </subcellularLocation>
</comment>
<comment type="miscellaneous">
    <text evidence="4">Present with 101000 molecules/cell in log phase SD medium.</text>
</comment>
<comment type="miscellaneous">
    <text evidence="10">There are 2 genes for uL30 in yeast.</text>
</comment>
<comment type="similarity">
    <text evidence="10">Belongs to the universal ribosomal protein uL30 family.</text>
</comment>
<accession>P05737</accession>
<accession>D6VU68</accession>
<accession>P87029</accession>